<organism>
    <name type="scientific">Methanococcoides burtonii (strain DSM 6242 / NBRC 107633 / OCM 468 / ACE-M)</name>
    <dbReference type="NCBI Taxonomy" id="259564"/>
    <lineage>
        <taxon>Archaea</taxon>
        <taxon>Methanobacteriati</taxon>
        <taxon>Methanobacteriota</taxon>
        <taxon>Stenosarchaea group</taxon>
        <taxon>Methanomicrobia</taxon>
        <taxon>Methanosarcinales</taxon>
        <taxon>Methanosarcinaceae</taxon>
        <taxon>Methanococcoides</taxon>
    </lineage>
</organism>
<protein>
    <recommendedName>
        <fullName evidence="1">Putative snRNP Sm-like protein</fullName>
    </recommendedName>
</protein>
<name>RUXX_METBU</name>
<dbReference type="EMBL" id="CP000300">
    <property type="protein sequence ID" value="ABE53046.1"/>
    <property type="molecule type" value="Genomic_DNA"/>
</dbReference>
<dbReference type="RefSeq" id="WP_011500182.1">
    <property type="nucleotide sequence ID" value="NC_007955.1"/>
</dbReference>
<dbReference type="SMR" id="Q12U30"/>
<dbReference type="STRING" id="259564.Mbur_2181"/>
<dbReference type="GeneID" id="3997037"/>
<dbReference type="KEGG" id="mbu:Mbur_2181"/>
<dbReference type="HOGENOM" id="CLU_076902_11_1_2"/>
<dbReference type="OrthoDB" id="371816at2157"/>
<dbReference type="Proteomes" id="UP000001979">
    <property type="component" value="Chromosome"/>
</dbReference>
<dbReference type="GO" id="GO:1990904">
    <property type="term" value="C:ribonucleoprotein complex"/>
    <property type="evidence" value="ECO:0007669"/>
    <property type="project" value="UniProtKB-KW"/>
</dbReference>
<dbReference type="GO" id="GO:0003723">
    <property type="term" value="F:RNA binding"/>
    <property type="evidence" value="ECO:0007669"/>
    <property type="project" value="InterPro"/>
</dbReference>
<dbReference type="CDD" id="cd01731">
    <property type="entry name" value="archaeal_Sm1"/>
    <property type="match status" value="1"/>
</dbReference>
<dbReference type="Gene3D" id="2.30.30.100">
    <property type="match status" value="1"/>
</dbReference>
<dbReference type="HAMAP" id="MF_00257">
    <property type="entry name" value="Lsm_RuxX"/>
    <property type="match status" value="1"/>
</dbReference>
<dbReference type="InterPro" id="IPR044641">
    <property type="entry name" value="Lsm7/SmG-like"/>
</dbReference>
<dbReference type="InterPro" id="IPR010920">
    <property type="entry name" value="LSM_dom_sf"/>
</dbReference>
<dbReference type="InterPro" id="IPR047575">
    <property type="entry name" value="Sm"/>
</dbReference>
<dbReference type="InterPro" id="IPR001163">
    <property type="entry name" value="Sm_dom_euk/arc"/>
</dbReference>
<dbReference type="InterPro" id="IPR022901">
    <property type="entry name" value="snRNP_Sm-like_arc"/>
</dbReference>
<dbReference type="NCBIfam" id="NF001963">
    <property type="entry name" value="PRK00737.1"/>
    <property type="match status" value="1"/>
</dbReference>
<dbReference type="PANTHER" id="PTHR10553">
    <property type="entry name" value="SMALL NUCLEAR RIBONUCLEOPROTEIN"/>
    <property type="match status" value="1"/>
</dbReference>
<dbReference type="PANTHER" id="PTHR10553:SF5">
    <property type="entry name" value="U6 SNRNA-ASSOCIATED SM-LIKE PROTEIN LSM7"/>
    <property type="match status" value="1"/>
</dbReference>
<dbReference type="Pfam" id="PF01423">
    <property type="entry name" value="LSM"/>
    <property type="match status" value="1"/>
</dbReference>
<dbReference type="PIRSF" id="PIRSF006609">
    <property type="entry name" value="snRNP_SmF"/>
    <property type="match status" value="1"/>
</dbReference>
<dbReference type="SMART" id="SM00651">
    <property type="entry name" value="Sm"/>
    <property type="match status" value="1"/>
</dbReference>
<dbReference type="SUPFAM" id="SSF50182">
    <property type="entry name" value="Sm-like ribonucleoproteins"/>
    <property type="match status" value="1"/>
</dbReference>
<dbReference type="PROSITE" id="PS52002">
    <property type="entry name" value="SM"/>
    <property type="match status" value="1"/>
</dbReference>
<feature type="chain" id="PRO_1000003430" description="Putative snRNP Sm-like protein">
    <location>
        <begin position="1"/>
        <end position="72"/>
    </location>
</feature>
<feature type="domain" description="Sm" evidence="2">
    <location>
        <begin position="4"/>
        <end position="72"/>
    </location>
</feature>
<evidence type="ECO:0000255" key="1">
    <source>
        <dbReference type="HAMAP-Rule" id="MF_00257"/>
    </source>
</evidence>
<evidence type="ECO:0000255" key="2">
    <source>
        <dbReference type="PROSITE-ProRule" id="PRU01346"/>
    </source>
</evidence>
<keyword id="KW-0687">Ribonucleoprotein</keyword>
<reference key="1">
    <citation type="journal article" date="2009" name="ISME J.">
        <title>The genome sequence of the psychrophilic archaeon, Methanococcoides burtonii: the role of genome evolution in cold adaptation.</title>
        <authorList>
            <person name="Allen M.A."/>
            <person name="Lauro F.M."/>
            <person name="Williams T.J."/>
            <person name="Burg D."/>
            <person name="Siddiqui K.S."/>
            <person name="De Francisci D."/>
            <person name="Chong K.W."/>
            <person name="Pilak O."/>
            <person name="Chew H.H."/>
            <person name="De Maere M.Z."/>
            <person name="Ting L."/>
            <person name="Katrib M."/>
            <person name="Ng C."/>
            <person name="Sowers K.R."/>
            <person name="Galperin M.Y."/>
            <person name="Anderson I.J."/>
            <person name="Ivanova N."/>
            <person name="Dalin E."/>
            <person name="Martinez M."/>
            <person name="Lapidus A."/>
            <person name="Hauser L."/>
            <person name="Land M."/>
            <person name="Thomas T."/>
            <person name="Cavicchioli R."/>
        </authorList>
    </citation>
    <scope>NUCLEOTIDE SEQUENCE [LARGE SCALE GENOMIC DNA]</scope>
    <source>
        <strain>DSM 6242 / NBRC 107633 / OCM 468 / ACE-M</strain>
    </source>
</reference>
<comment type="similarity">
    <text evidence="1">Belongs to the snRNP Sm proteins family.</text>
</comment>
<sequence>MGNRPLDILNDALNTSVIVRLKGAREFRGVLQGYDVHMNLVLDEAEELKDGEIVRKIGGVVIRGDNVVYVSP</sequence>
<gene>
    <name type="ordered locus">Mbur_2181</name>
</gene>
<proteinExistence type="inferred from homology"/>
<accession>Q12U30</accession>